<proteinExistence type="inferred from homology"/>
<protein>
    <recommendedName>
        <fullName evidence="1">3-aminoacrylate deaminase RutC</fullName>
        <shortName evidence="1">3-AA deaminase</shortName>
        <ecNumber evidence="1">3.5.-.-</ecNumber>
    </recommendedName>
</protein>
<comment type="function">
    <text evidence="1">Involved in pyrimidine catabolism. Catalyzes the deamination of 3-aminoacrylate to malonic semialdehyde, a reaction that can also occur spontaneously. RutC may facilitate the reaction and modulate the metabolic fitness, rather than catalyzing essential functions.</text>
</comment>
<comment type="catalytic activity">
    <reaction evidence="1">
        <text>(Z)-3-aminoacrylate + H2O + H(+) = 3-oxopropanoate + NH4(+)</text>
        <dbReference type="Rhea" id="RHEA:34947"/>
        <dbReference type="ChEBI" id="CHEBI:15377"/>
        <dbReference type="ChEBI" id="CHEBI:15378"/>
        <dbReference type="ChEBI" id="CHEBI:28938"/>
        <dbReference type="ChEBI" id="CHEBI:33190"/>
        <dbReference type="ChEBI" id="CHEBI:59894"/>
    </reaction>
</comment>
<comment type="similarity">
    <text evidence="1">Belongs to the RutC family.</text>
</comment>
<gene>
    <name evidence="1" type="primary">rutC</name>
    <name type="ordered locus">Psyr_0997</name>
</gene>
<reference key="1">
    <citation type="journal article" date="2005" name="Proc. Natl. Acad. Sci. U.S.A.">
        <title>Comparison of the complete genome sequences of Pseudomonas syringae pv. syringae B728a and pv. tomato DC3000.</title>
        <authorList>
            <person name="Feil H."/>
            <person name="Feil W.S."/>
            <person name="Chain P."/>
            <person name="Larimer F."/>
            <person name="Dibartolo G."/>
            <person name="Copeland A."/>
            <person name="Lykidis A."/>
            <person name="Trong S."/>
            <person name="Nolan M."/>
            <person name="Goltsman E."/>
            <person name="Thiel J."/>
            <person name="Malfatti S."/>
            <person name="Loper J.E."/>
            <person name="Lapidus A."/>
            <person name="Detter J.C."/>
            <person name="Land M."/>
            <person name="Richardson P.M."/>
            <person name="Kyrpides N.C."/>
            <person name="Ivanova N."/>
            <person name="Lindow S.E."/>
        </authorList>
    </citation>
    <scope>NUCLEOTIDE SEQUENCE [LARGE SCALE GENOMIC DNA]</scope>
    <source>
        <strain>B728a</strain>
    </source>
</reference>
<feature type="chain" id="PRO_0000402763" description="3-aminoacrylate deaminase RutC">
    <location>
        <begin position="1"/>
        <end position="127"/>
    </location>
</feature>
<dbReference type="EC" id="3.5.-.-" evidence="1"/>
<dbReference type="EMBL" id="CP000075">
    <property type="protein sequence ID" value="AAY36053.1"/>
    <property type="molecule type" value="Genomic_DNA"/>
</dbReference>
<dbReference type="RefSeq" id="WP_003408714.1">
    <property type="nucleotide sequence ID" value="NC_007005.1"/>
</dbReference>
<dbReference type="RefSeq" id="YP_234091.1">
    <property type="nucleotide sequence ID" value="NC_007005.1"/>
</dbReference>
<dbReference type="SMR" id="Q4ZXR9"/>
<dbReference type="STRING" id="205918.Psyr_0997"/>
<dbReference type="KEGG" id="psb:Psyr_0997"/>
<dbReference type="PATRIC" id="fig|205918.7.peg.1026"/>
<dbReference type="eggNOG" id="COG0251">
    <property type="taxonomic scope" value="Bacteria"/>
</dbReference>
<dbReference type="HOGENOM" id="CLU_100715_7_3_6"/>
<dbReference type="OrthoDB" id="583118at2"/>
<dbReference type="Proteomes" id="UP000000426">
    <property type="component" value="Chromosome"/>
</dbReference>
<dbReference type="GO" id="GO:0005829">
    <property type="term" value="C:cytosol"/>
    <property type="evidence" value="ECO:0007669"/>
    <property type="project" value="TreeGrafter"/>
</dbReference>
<dbReference type="GO" id="GO:0019239">
    <property type="term" value="F:deaminase activity"/>
    <property type="evidence" value="ECO:0007669"/>
    <property type="project" value="TreeGrafter"/>
</dbReference>
<dbReference type="GO" id="GO:0019740">
    <property type="term" value="P:nitrogen utilization"/>
    <property type="evidence" value="ECO:0007669"/>
    <property type="project" value="UniProtKB-UniRule"/>
</dbReference>
<dbReference type="GO" id="GO:0006212">
    <property type="term" value="P:uracil catabolic process"/>
    <property type="evidence" value="ECO:0007669"/>
    <property type="project" value="UniProtKB-UniRule"/>
</dbReference>
<dbReference type="CDD" id="cd00448">
    <property type="entry name" value="YjgF_YER057c_UK114_family"/>
    <property type="match status" value="1"/>
</dbReference>
<dbReference type="Gene3D" id="3.30.1330.40">
    <property type="entry name" value="RutC-like"/>
    <property type="match status" value="1"/>
</dbReference>
<dbReference type="HAMAP" id="MF_00831">
    <property type="entry name" value="RutC"/>
    <property type="match status" value="1"/>
</dbReference>
<dbReference type="InterPro" id="IPR019898">
    <property type="entry name" value="RutC"/>
</dbReference>
<dbReference type="InterPro" id="IPR035959">
    <property type="entry name" value="RutC-like_sf"/>
</dbReference>
<dbReference type="InterPro" id="IPR006175">
    <property type="entry name" value="YjgF/YER057c/UK114"/>
</dbReference>
<dbReference type="NCBIfam" id="TIGR03610">
    <property type="entry name" value="RutC"/>
    <property type="match status" value="1"/>
</dbReference>
<dbReference type="PANTHER" id="PTHR11803">
    <property type="entry name" value="2-IMINOBUTANOATE/2-IMINOPROPANOATE DEAMINASE RIDA"/>
    <property type="match status" value="1"/>
</dbReference>
<dbReference type="PANTHER" id="PTHR11803:SF58">
    <property type="entry name" value="PROTEIN HMF1-RELATED"/>
    <property type="match status" value="1"/>
</dbReference>
<dbReference type="Pfam" id="PF01042">
    <property type="entry name" value="Ribonuc_L-PSP"/>
    <property type="match status" value="1"/>
</dbReference>
<dbReference type="SUPFAM" id="SSF55298">
    <property type="entry name" value="YjgF-like"/>
    <property type="match status" value="1"/>
</dbReference>
<evidence type="ECO:0000255" key="1">
    <source>
        <dbReference type="HAMAP-Rule" id="MF_00831"/>
    </source>
</evidence>
<name>RUTC_PSEU2</name>
<accession>Q4ZXR9</accession>
<organism>
    <name type="scientific">Pseudomonas syringae pv. syringae (strain B728a)</name>
    <dbReference type="NCBI Taxonomy" id="205918"/>
    <lineage>
        <taxon>Bacteria</taxon>
        <taxon>Pseudomonadati</taxon>
        <taxon>Pseudomonadota</taxon>
        <taxon>Gammaproteobacteria</taxon>
        <taxon>Pseudomonadales</taxon>
        <taxon>Pseudomonadaceae</taxon>
        <taxon>Pseudomonas</taxon>
        <taxon>Pseudomonas syringae</taxon>
    </lineage>
</organism>
<sequence>MTKKAIIPAGTSKPIAPFVPGSMADGVLYVSGTLPFDKDNNVVHVGDATAQTRHVLEAIKSVVETAGGTLDDVTFNMIMIRDWADYAKVNEVYAEYFAGEKPARYCIQCGLVKPEALIEIASIAHIG</sequence>
<keyword id="KW-0378">Hydrolase</keyword>